<sequence>MTHLFEGVGVALTTPFTNNKVNLEALKAHVNFLLENNAQAIIVNGTTAESPTLTTDEKERILKTVIDLVDKRVPVIAGTGTNDTEKSIQASFQAKALGADAIMLITPYYNKTNQRGLVKHFEAITDAVKLPVVLYNVPSRTNMTIEPETVEILSQHPYIVALKDATNDFEYLEEVKKRIDTNSFALYSGNDDNVVEYYQRGGQGVISVIANVIPKEFQALYDAQQSGLDIQDQFKPIGTLLSALSVDINPIPIKALTSYLEFGNYELRLPLVSLEDTDTKVLREAYDTFKAGENE</sequence>
<evidence type="ECO:0000255" key="1">
    <source>
        <dbReference type="HAMAP-Rule" id="MF_00418"/>
    </source>
</evidence>
<evidence type="ECO:0000305" key="2"/>
<keyword id="KW-0028">Amino-acid biosynthesis</keyword>
<keyword id="KW-0963">Cytoplasm</keyword>
<keyword id="KW-0220">Diaminopimelate biosynthesis</keyword>
<keyword id="KW-0456">Lyase</keyword>
<keyword id="KW-0457">Lysine biosynthesis</keyword>
<keyword id="KW-0704">Schiff base</keyword>
<organism>
    <name type="scientific">Staphylococcus aureus (strain Mu3 / ATCC 700698)</name>
    <dbReference type="NCBI Taxonomy" id="418127"/>
    <lineage>
        <taxon>Bacteria</taxon>
        <taxon>Bacillati</taxon>
        <taxon>Bacillota</taxon>
        <taxon>Bacilli</taxon>
        <taxon>Bacillales</taxon>
        <taxon>Staphylococcaceae</taxon>
        <taxon>Staphylococcus</taxon>
    </lineage>
</organism>
<name>DAPA_STAA1</name>
<protein>
    <recommendedName>
        <fullName evidence="1">4-hydroxy-tetrahydrodipicolinate synthase</fullName>
        <shortName evidence="1">HTPA synthase</shortName>
        <ecNumber evidence="1">4.3.3.7</ecNumber>
    </recommendedName>
</protein>
<gene>
    <name evidence="1" type="primary">dapA</name>
    <name type="ordered locus">SAHV_1383</name>
</gene>
<proteinExistence type="inferred from homology"/>
<dbReference type="EC" id="4.3.3.7" evidence="1"/>
<dbReference type="EMBL" id="AP009324">
    <property type="protein sequence ID" value="BAF78266.1"/>
    <property type="molecule type" value="Genomic_DNA"/>
</dbReference>
<dbReference type="RefSeq" id="WP_000149278.1">
    <property type="nucleotide sequence ID" value="NC_009782.1"/>
</dbReference>
<dbReference type="SMR" id="A7X271"/>
<dbReference type="KEGG" id="saw:SAHV_1383"/>
<dbReference type="HOGENOM" id="CLU_049343_7_0_9"/>
<dbReference type="UniPathway" id="UPA00034">
    <property type="reaction ID" value="UER00017"/>
</dbReference>
<dbReference type="GO" id="GO:0005829">
    <property type="term" value="C:cytosol"/>
    <property type="evidence" value="ECO:0007669"/>
    <property type="project" value="TreeGrafter"/>
</dbReference>
<dbReference type="GO" id="GO:0008840">
    <property type="term" value="F:4-hydroxy-tetrahydrodipicolinate synthase activity"/>
    <property type="evidence" value="ECO:0007669"/>
    <property type="project" value="UniProtKB-UniRule"/>
</dbReference>
<dbReference type="GO" id="GO:0019877">
    <property type="term" value="P:diaminopimelate biosynthetic process"/>
    <property type="evidence" value="ECO:0007669"/>
    <property type="project" value="UniProtKB-UniRule"/>
</dbReference>
<dbReference type="GO" id="GO:0009089">
    <property type="term" value="P:lysine biosynthetic process via diaminopimelate"/>
    <property type="evidence" value="ECO:0007669"/>
    <property type="project" value="UniProtKB-UniRule"/>
</dbReference>
<dbReference type="CDD" id="cd00950">
    <property type="entry name" value="DHDPS"/>
    <property type="match status" value="1"/>
</dbReference>
<dbReference type="Gene3D" id="3.20.20.70">
    <property type="entry name" value="Aldolase class I"/>
    <property type="match status" value="1"/>
</dbReference>
<dbReference type="HAMAP" id="MF_00418">
    <property type="entry name" value="DapA"/>
    <property type="match status" value="1"/>
</dbReference>
<dbReference type="InterPro" id="IPR013785">
    <property type="entry name" value="Aldolase_TIM"/>
</dbReference>
<dbReference type="InterPro" id="IPR005263">
    <property type="entry name" value="DapA"/>
</dbReference>
<dbReference type="InterPro" id="IPR002220">
    <property type="entry name" value="DapA-like"/>
</dbReference>
<dbReference type="InterPro" id="IPR020625">
    <property type="entry name" value="Schiff_base-form_aldolases_AS"/>
</dbReference>
<dbReference type="NCBIfam" id="TIGR00674">
    <property type="entry name" value="dapA"/>
    <property type="match status" value="1"/>
</dbReference>
<dbReference type="PANTHER" id="PTHR12128:SF66">
    <property type="entry name" value="4-HYDROXY-2-OXOGLUTARATE ALDOLASE, MITOCHONDRIAL"/>
    <property type="match status" value="1"/>
</dbReference>
<dbReference type="PANTHER" id="PTHR12128">
    <property type="entry name" value="DIHYDRODIPICOLINATE SYNTHASE"/>
    <property type="match status" value="1"/>
</dbReference>
<dbReference type="Pfam" id="PF00701">
    <property type="entry name" value="DHDPS"/>
    <property type="match status" value="1"/>
</dbReference>
<dbReference type="PIRSF" id="PIRSF001365">
    <property type="entry name" value="DHDPS"/>
    <property type="match status" value="1"/>
</dbReference>
<dbReference type="PRINTS" id="PR00146">
    <property type="entry name" value="DHPICSNTHASE"/>
</dbReference>
<dbReference type="SMART" id="SM01130">
    <property type="entry name" value="DHDPS"/>
    <property type="match status" value="1"/>
</dbReference>
<dbReference type="SUPFAM" id="SSF51569">
    <property type="entry name" value="Aldolase"/>
    <property type="match status" value="1"/>
</dbReference>
<dbReference type="PROSITE" id="PS00666">
    <property type="entry name" value="DHDPS_2"/>
    <property type="match status" value="1"/>
</dbReference>
<reference key="1">
    <citation type="journal article" date="2008" name="Antimicrob. Agents Chemother.">
        <title>Mutated response regulator graR is responsible for phenotypic conversion of Staphylococcus aureus from heterogeneous vancomycin-intermediate resistance to vancomycin-intermediate resistance.</title>
        <authorList>
            <person name="Neoh H.-M."/>
            <person name="Cui L."/>
            <person name="Yuzawa H."/>
            <person name="Takeuchi F."/>
            <person name="Matsuo M."/>
            <person name="Hiramatsu K."/>
        </authorList>
    </citation>
    <scope>NUCLEOTIDE SEQUENCE [LARGE SCALE GENOMIC DNA]</scope>
    <source>
        <strain>Mu3 / ATCC 700698</strain>
    </source>
</reference>
<comment type="function">
    <text evidence="1">Catalyzes the condensation of (S)-aspartate-beta-semialdehyde [(S)-ASA] and pyruvate to 4-hydroxy-tetrahydrodipicolinate (HTPA).</text>
</comment>
<comment type="catalytic activity">
    <reaction evidence="1">
        <text>L-aspartate 4-semialdehyde + pyruvate = (2S,4S)-4-hydroxy-2,3,4,5-tetrahydrodipicolinate + H2O + H(+)</text>
        <dbReference type="Rhea" id="RHEA:34171"/>
        <dbReference type="ChEBI" id="CHEBI:15361"/>
        <dbReference type="ChEBI" id="CHEBI:15377"/>
        <dbReference type="ChEBI" id="CHEBI:15378"/>
        <dbReference type="ChEBI" id="CHEBI:67139"/>
        <dbReference type="ChEBI" id="CHEBI:537519"/>
        <dbReference type="EC" id="4.3.3.7"/>
    </reaction>
</comment>
<comment type="pathway">
    <text evidence="1">Amino-acid biosynthesis; L-lysine biosynthesis via DAP pathway; (S)-tetrahydrodipicolinate from L-aspartate: step 3/4.</text>
</comment>
<comment type="subunit">
    <text evidence="1">Homodimer.</text>
</comment>
<comment type="subcellular location">
    <subcellularLocation>
        <location evidence="1">Cytoplasm</location>
    </subcellularLocation>
</comment>
<comment type="similarity">
    <text evidence="1">Belongs to the DapA family.</text>
</comment>
<comment type="caution">
    <text evidence="2">Was originally thought to be a dihydrodipicolinate synthase (DHDPS), catalyzing the condensation of (S)-aspartate-beta-semialdehyde [(S)-ASA] and pyruvate to dihydrodipicolinate (DHDP). However, it was shown in E.coli that the product of the enzymatic reaction is not dihydrodipicolinate but in fact (4S)-4-hydroxy-2,3,4,5-tetrahydro-(2S)-dipicolinic acid (HTPA), and that the consecutive dehydration reaction leading to DHDP is not spontaneous but catalyzed by DapB.</text>
</comment>
<feature type="chain" id="PRO_1000050277" description="4-hydroxy-tetrahydrodipicolinate synthase">
    <location>
        <begin position="1"/>
        <end position="295"/>
    </location>
</feature>
<feature type="active site" description="Proton donor/acceptor" evidence="1">
    <location>
        <position position="135"/>
    </location>
</feature>
<feature type="active site" description="Schiff-base intermediate with substrate" evidence="1">
    <location>
        <position position="163"/>
    </location>
</feature>
<feature type="binding site" evidence="1">
    <location>
        <position position="47"/>
    </location>
    <ligand>
        <name>pyruvate</name>
        <dbReference type="ChEBI" id="CHEBI:15361"/>
    </ligand>
</feature>
<feature type="binding site" evidence="1">
    <location>
        <position position="206"/>
    </location>
    <ligand>
        <name>pyruvate</name>
        <dbReference type="ChEBI" id="CHEBI:15361"/>
    </ligand>
</feature>
<feature type="site" description="Part of a proton relay during catalysis" evidence="1">
    <location>
        <position position="46"/>
    </location>
</feature>
<feature type="site" description="Part of a proton relay during catalysis" evidence="1">
    <location>
        <position position="109"/>
    </location>
</feature>
<accession>A7X271</accession>